<keyword id="KW-0903">Direct protein sequencing</keyword>
<keyword id="KW-0256">Endoplasmic reticulum</keyword>
<keyword id="KW-0276">Fatty acid metabolism</keyword>
<keyword id="KW-0378">Hydrolase</keyword>
<keyword id="KW-0443">Lipid metabolism</keyword>
<keyword id="KW-0492">Microsome</keyword>
<keyword id="KW-1185">Reference proteome</keyword>
<reference key="1">
    <citation type="journal article" date="1993" name="Eur. J. Biochem.">
        <title>Isolation and characterization of microsomal acyl-CoA thioesterase. A member of the rat liver microsomal carboxylesterase multi-gene family.</title>
        <authorList>
            <person name="Alexson S.E.H."/>
            <person name="Mentlein R."/>
            <person name="Wernstedt C."/>
            <person name="Hellman U."/>
        </authorList>
    </citation>
    <scope>PROTEIN SEQUENCE</scope>
    <source>
        <tissue>Liver</tissue>
    </source>
</reference>
<sequence length="64" mass="6919">NPSSPPVVDTTNTTSYPPMCSQDAVGGQVLENIPLQEDCLYNFNTVPYIVGIIPEDIIPVAIEK</sequence>
<evidence type="ECO:0000305" key="1"/>
<protein>
    <recommendedName>
        <fullName>Palmitoyl-CoA hydrolase</fullName>
        <ecNumber>3.1.2.2</ecNumber>
    </recommendedName>
    <alternativeName>
        <fullName>Long-chain fatty-acyl-CoA hydrolase</fullName>
    </alternativeName>
</protein>
<proteinExistence type="evidence at protein level"/>
<comment type="function">
    <text>Hydrolysis of a variety of CoA thioesters of long-chain fatty acids.</text>
</comment>
<comment type="catalytic activity">
    <reaction>
        <text>hexadecanoyl-CoA + H2O = hexadecanoate + CoA + H(+)</text>
        <dbReference type="Rhea" id="RHEA:16645"/>
        <dbReference type="ChEBI" id="CHEBI:7896"/>
        <dbReference type="ChEBI" id="CHEBI:15377"/>
        <dbReference type="ChEBI" id="CHEBI:15378"/>
        <dbReference type="ChEBI" id="CHEBI:57287"/>
        <dbReference type="ChEBI" id="CHEBI:57379"/>
        <dbReference type="EC" id="3.1.2.2"/>
    </reaction>
</comment>
<comment type="subunit">
    <text>Monomer and homotrimer.</text>
</comment>
<comment type="subcellular location">
    <subcellularLocation>
        <location>Microsome</location>
    </subcellularLocation>
    <subcellularLocation>
        <location>Endoplasmic reticulum</location>
    </subcellularLocation>
</comment>
<comment type="similarity">
    <text evidence="1">Belongs to the type-B carboxylesterase/lipase family.</text>
</comment>
<accession>P80250</accession>
<dbReference type="EC" id="3.1.2.2"/>
<dbReference type="SMR" id="P80250"/>
<dbReference type="ESTHER" id="ratno-q68g49">
    <property type="family name" value="Carb_B_Chordata"/>
</dbReference>
<dbReference type="InParanoid" id="P80250"/>
<dbReference type="BRENDA" id="3.1.2.2">
    <property type="organism ID" value="5301"/>
</dbReference>
<dbReference type="BRENDA" id="3.1.2.20">
    <property type="organism ID" value="5301"/>
</dbReference>
<dbReference type="Proteomes" id="UP000002494">
    <property type="component" value="Unplaced"/>
</dbReference>
<dbReference type="GO" id="GO:0005783">
    <property type="term" value="C:endoplasmic reticulum"/>
    <property type="evidence" value="ECO:0007669"/>
    <property type="project" value="UniProtKB-SubCell"/>
</dbReference>
<dbReference type="GO" id="GO:0016787">
    <property type="term" value="F:hydrolase activity"/>
    <property type="evidence" value="ECO:0007669"/>
    <property type="project" value="UniProtKB-KW"/>
</dbReference>
<dbReference type="GO" id="GO:0006631">
    <property type="term" value="P:fatty acid metabolic process"/>
    <property type="evidence" value="ECO:0007669"/>
    <property type="project" value="UniProtKB-KW"/>
</dbReference>
<feature type="chain" id="PRO_0000070294" description="Palmitoyl-CoA hydrolase">
    <location>
        <begin position="1"/>
        <end position="64" status="greater than"/>
    </location>
</feature>
<feature type="non-terminal residue">
    <location>
        <position position="64"/>
    </location>
</feature>
<organism>
    <name type="scientific">Rattus norvegicus</name>
    <name type="common">Rat</name>
    <dbReference type="NCBI Taxonomy" id="10116"/>
    <lineage>
        <taxon>Eukaryota</taxon>
        <taxon>Metazoa</taxon>
        <taxon>Chordata</taxon>
        <taxon>Craniata</taxon>
        <taxon>Vertebrata</taxon>
        <taxon>Euteleostomi</taxon>
        <taxon>Mammalia</taxon>
        <taxon>Eutheria</taxon>
        <taxon>Euarchontoglires</taxon>
        <taxon>Glires</taxon>
        <taxon>Rodentia</taxon>
        <taxon>Myomorpha</taxon>
        <taxon>Muroidea</taxon>
        <taxon>Muridae</taxon>
        <taxon>Murinae</taxon>
        <taxon>Rattus</taxon>
    </lineage>
</organism>
<name>PMCH_RAT</name>